<name>RS13_HELPS</name>
<comment type="function">
    <text evidence="1">Located at the top of the head of the 30S subunit, it contacts several helices of the 16S rRNA. In the 70S ribosome it contacts the 23S rRNA (bridge B1a) and protein L5 of the 50S subunit (bridge B1b), connecting the 2 subunits; these bridges are implicated in subunit movement. Contacts the tRNAs in the A and P-sites.</text>
</comment>
<comment type="subunit">
    <text evidence="1">Part of the 30S ribosomal subunit. Forms a loose heterodimer with protein S19. Forms two bridges to the 50S subunit in the 70S ribosome.</text>
</comment>
<comment type="similarity">
    <text evidence="1">Belongs to the universal ribosomal protein uS13 family.</text>
</comment>
<proteinExistence type="inferred from homology"/>
<feature type="chain" id="PRO_1000141271" description="Small ribosomal subunit protein uS13">
    <location>
        <begin position="1"/>
        <end position="120"/>
    </location>
</feature>
<feature type="region of interest" description="Disordered" evidence="2">
    <location>
        <begin position="93"/>
        <end position="120"/>
    </location>
</feature>
<feature type="compositionally biased region" description="Basic residues" evidence="2">
    <location>
        <begin position="107"/>
        <end position="120"/>
    </location>
</feature>
<keyword id="KW-0687">Ribonucleoprotein</keyword>
<keyword id="KW-0689">Ribosomal protein</keyword>
<keyword id="KW-0694">RNA-binding</keyword>
<keyword id="KW-0699">rRNA-binding</keyword>
<keyword id="KW-0820">tRNA-binding</keyword>
<accession>B2UV59</accession>
<reference key="1">
    <citation type="submission" date="2008-05" db="EMBL/GenBank/DDBJ databases">
        <title>Genome sequence of Helicobacter pylori from the remote Amazon: traces of Asian ancestry of the first Americans.</title>
        <authorList>
            <person name="Kersulyte D."/>
            <person name="Kalia A."/>
            <person name="Gilman R.H."/>
            <person name="Berg D.E."/>
        </authorList>
    </citation>
    <scope>NUCLEOTIDE SEQUENCE [LARGE SCALE GENOMIC DNA]</scope>
    <source>
        <strain>Shi470</strain>
    </source>
</reference>
<evidence type="ECO:0000255" key="1">
    <source>
        <dbReference type="HAMAP-Rule" id="MF_01315"/>
    </source>
</evidence>
<evidence type="ECO:0000256" key="2">
    <source>
        <dbReference type="SAM" id="MobiDB-lite"/>
    </source>
</evidence>
<evidence type="ECO:0000305" key="3"/>
<gene>
    <name evidence="1" type="primary">rpsM</name>
    <name type="ordered locus">HPSH_06705</name>
</gene>
<dbReference type="EMBL" id="CP001072">
    <property type="protein sequence ID" value="ACD48741.1"/>
    <property type="molecule type" value="Genomic_DNA"/>
</dbReference>
<dbReference type="RefSeq" id="WP_000090809.1">
    <property type="nucleotide sequence ID" value="NC_010698.2"/>
</dbReference>
<dbReference type="SMR" id="B2UV59"/>
<dbReference type="GeneID" id="93237573"/>
<dbReference type="KEGG" id="hps:HPSH_06705"/>
<dbReference type="HOGENOM" id="CLU_103849_1_2_7"/>
<dbReference type="GO" id="GO:0005829">
    <property type="term" value="C:cytosol"/>
    <property type="evidence" value="ECO:0007669"/>
    <property type="project" value="TreeGrafter"/>
</dbReference>
<dbReference type="GO" id="GO:0015935">
    <property type="term" value="C:small ribosomal subunit"/>
    <property type="evidence" value="ECO:0007669"/>
    <property type="project" value="TreeGrafter"/>
</dbReference>
<dbReference type="GO" id="GO:0019843">
    <property type="term" value="F:rRNA binding"/>
    <property type="evidence" value="ECO:0007669"/>
    <property type="project" value="UniProtKB-UniRule"/>
</dbReference>
<dbReference type="GO" id="GO:0003735">
    <property type="term" value="F:structural constituent of ribosome"/>
    <property type="evidence" value="ECO:0007669"/>
    <property type="project" value="InterPro"/>
</dbReference>
<dbReference type="GO" id="GO:0000049">
    <property type="term" value="F:tRNA binding"/>
    <property type="evidence" value="ECO:0007669"/>
    <property type="project" value="UniProtKB-UniRule"/>
</dbReference>
<dbReference type="GO" id="GO:0006412">
    <property type="term" value="P:translation"/>
    <property type="evidence" value="ECO:0007669"/>
    <property type="project" value="UniProtKB-UniRule"/>
</dbReference>
<dbReference type="FunFam" id="1.10.8.50:FF:000001">
    <property type="entry name" value="30S ribosomal protein S13"/>
    <property type="match status" value="1"/>
</dbReference>
<dbReference type="FunFam" id="4.10.910.10:FF:000001">
    <property type="entry name" value="30S ribosomal protein S13"/>
    <property type="match status" value="1"/>
</dbReference>
<dbReference type="Gene3D" id="1.10.8.50">
    <property type="match status" value="1"/>
</dbReference>
<dbReference type="Gene3D" id="4.10.910.10">
    <property type="entry name" value="30s ribosomal protein s13, domain 2"/>
    <property type="match status" value="1"/>
</dbReference>
<dbReference type="HAMAP" id="MF_01315">
    <property type="entry name" value="Ribosomal_uS13"/>
    <property type="match status" value="1"/>
</dbReference>
<dbReference type="InterPro" id="IPR027437">
    <property type="entry name" value="Rbsml_uS13_C"/>
</dbReference>
<dbReference type="InterPro" id="IPR001892">
    <property type="entry name" value="Ribosomal_uS13"/>
</dbReference>
<dbReference type="InterPro" id="IPR010979">
    <property type="entry name" value="Ribosomal_uS13-like_H2TH"/>
</dbReference>
<dbReference type="InterPro" id="IPR019980">
    <property type="entry name" value="Ribosomal_uS13_bac-type"/>
</dbReference>
<dbReference type="InterPro" id="IPR018269">
    <property type="entry name" value="Ribosomal_uS13_CS"/>
</dbReference>
<dbReference type="NCBIfam" id="TIGR03631">
    <property type="entry name" value="uS13_bact"/>
    <property type="match status" value="1"/>
</dbReference>
<dbReference type="PANTHER" id="PTHR10871">
    <property type="entry name" value="30S RIBOSOMAL PROTEIN S13/40S RIBOSOMAL PROTEIN S18"/>
    <property type="match status" value="1"/>
</dbReference>
<dbReference type="PANTHER" id="PTHR10871:SF1">
    <property type="entry name" value="SMALL RIBOSOMAL SUBUNIT PROTEIN US13M"/>
    <property type="match status" value="1"/>
</dbReference>
<dbReference type="Pfam" id="PF00416">
    <property type="entry name" value="Ribosomal_S13"/>
    <property type="match status" value="1"/>
</dbReference>
<dbReference type="PIRSF" id="PIRSF002134">
    <property type="entry name" value="Ribosomal_S13"/>
    <property type="match status" value="1"/>
</dbReference>
<dbReference type="SUPFAM" id="SSF46946">
    <property type="entry name" value="S13-like H2TH domain"/>
    <property type="match status" value="1"/>
</dbReference>
<dbReference type="PROSITE" id="PS00646">
    <property type="entry name" value="RIBOSOMAL_S13_1"/>
    <property type="match status" value="1"/>
</dbReference>
<dbReference type="PROSITE" id="PS50159">
    <property type="entry name" value="RIBOSOMAL_S13_2"/>
    <property type="match status" value="1"/>
</dbReference>
<organism>
    <name type="scientific">Helicobacter pylori (strain Shi470)</name>
    <dbReference type="NCBI Taxonomy" id="512562"/>
    <lineage>
        <taxon>Bacteria</taxon>
        <taxon>Pseudomonadati</taxon>
        <taxon>Campylobacterota</taxon>
        <taxon>Epsilonproteobacteria</taxon>
        <taxon>Campylobacterales</taxon>
        <taxon>Helicobacteraceae</taxon>
        <taxon>Helicobacter</taxon>
    </lineage>
</organism>
<sequence length="120" mass="13575">MARIAGVDLPKKKRVEYALTYIYGIGLKSSREILEAVGISFDKRVHELSEDEVSSIAKKIQQSYLVEGDLRKKVQMDIKSLMDLGNYRGIRHRKGLPVRGQTTKNNARTRKGKKKTVGSK</sequence>
<protein>
    <recommendedName>
        <fullName evidence="1">Small ribosomal subunit protein uS13</fullName>
    </recommendedName>
    <alternativeName>
        <fullName evidence="3">30S ribosomal protein S13</fullName>
    </alternativeName>
</protein>